<keyword id="KW-0961">Cell wall biogenesis/degradation</keyword>
<keyword id="KW-0328">Glycosyltransferase</keyword>
<keyword id="KW-0472">Membrane</keyword>
<keyword id="KW-1185">Reference proteome</keyword>
<keyword id="KW-0808">Transferase</keyword>
<keyword id="KW-0812">Transmembrane</keyword>
<keyword id="KW-1133">Transmembrane helix</keyword>
<protein>
    <recommendedName>
        <fullName>Terminal beta-(1-&gt;2)-arabinofuranosyltransferase</fullName>
        <ecNumber>2.4.2.-</ecNumber>
    </recommendedName>
</protein>
<evidence type="ECO:0000255" key="1"/>
<evidence type="ECO:0000256" key="2">
    <source>
        <dbReference type="SAM" id="MobiDB-lite"/>
    </source>
</evidence>
<evidence type="ECO:0000269" key="3">
    <source>
    </source>
</evidence>
<evidence type="ECO:0000305" key="4"/>
<name>AFTB_CORGL</name>
<dbReference type="EC" id="2.4.2.-"/>
<dbReference type="EMBL" id="BA000036">
    <property type="protein sequence ID" value="BAC00273.1"/>
    <property type="molecule type" value="Genomic_DNA"/>
</dbReference>
<dbReference type="EMBL" id="BX927156">
    <property type="protein sequence ID" value="CAF20903.1"/>
    <property type="molecule type" value="Genomic_DNA"/>
</dbReference>
<dbReference type="RefSeq" id="NP_602070.1">
    <property type="nucleotide sequence ID" value="NC_003450.3"/>
</dbReference>
<dbReference type="RefSeq" id="WP_011266023.1">
    <property type="nucleotide sequence ID" value="NC_006958.1"/>
</dbReference>
<dbReference type="STRING" id="196627.cg3187"/>
<dbReference type="CAZy" id="GT89">
    <property type="family name" value="Glycosyltransferase Family 89"/>
</dbReference>
<dbReference type="KEGG" id="cgb:cg3187"/>
<dbReference type="KEGG" id="cgl:Cgl2879"/>
<dbReference type="PATRIC" id="fig|196627.13.peg.2811"/>
<dbReference type="eggNOG" id="COG1807">
    <property type="taxonomic scope" value="Bacteria"/>
</dbReference>
<dbReference type="HOGENOM" id="CLU_423257_0_0_11"/>
<dbReference type="OrthoDB" id="3721873at2"/>
<dbReference type="BioCyc" id="CORYNE:G18NG-12497-MONOMER"/>
<dbReference type="UniPathway" id="UPA00963"/>
<dbReference type="Proteomes" id="UP000000582">
    <property type="component" value="Chromosome"/>
</dbReference>
<dbReference type="Proteomes" id="UP000001009">
    <property type="component" value="Chromosome"/>
</dbReference>
<dbReference type="GO" id="GO:0016020">
    <property type="term" value="C:membrane"/>
    <property type="evidence" value="ECO:0007669"/>
    <property type="project" value="UniProtKB-SubCell"/>
</dbReference>
<dbReference type="GO" id="GO:0016757">
    <property type="term" value="F:glycosyltransferase activity"/>
    <property type="evidence" value="ECO:0007669"/>
    <property type="project" value="UniProtKB-KW"/>
</dbReference>
<dbReference type="GO" id="GO:0045227">
    <property type="term" value="P:capsule polysaccharide biosynthetic process"/>
    <property type="evidence" value="ECO:0007669"/>
    <property type="project" value="UniProtKB-UniPathway"/>
</dbReference>
<dbReference type="GO" id="GO:0071555">
    <property type="term" value="P:cell wall organization"/>
    <property type="evidence" value="ECO:0007669"/>
    <property type="project" value="UniProtKB-KW"/>
</dbReference>
<dbReference type="InterPro" id="IPR048243">
    <property type="entry name" value="AftB-like"/>
</dbReference>
<dbReference type="NCBIfam" id="NF041480">
    <property type="entry name" value="flag_mot_ctl_ZomB"/>
    <property type="match status" value="1"/>
</dbReference>
<accession>Q8NLR0</accession>
<accession>Q6M1Y1</accession>
<proteinExistence type="inferred from homology"/>
<organism>
    <name type="scientific">Corynebacterium glutamicum (strain ATCC 13032 / DSM 20300 / JCM 1318 / BCRC 11384 / CCUG 27702 / LMG 3730 / NBRC 12168 / NCIMB 10025 / NRRL B-2784 / 534)</name>
    <dbReference type="NCBI Taxonomy" id="196627"/>
    <lineage>
        <taxon>Bacteria</taxon>
        <taxon>Bacillati</taxon>
        <taxon>Actinomycetota</taxon>
        <taxon>Actinomycetes</taxon>
        <taxon>Mycobacteriales</taxon>
        <taxon>Corynebacteriaceae</taxon>
        <taxon>Corynebacterium</taxon>
    </lineage>
</organism>
<reference key="1">
    <citation type="journal article" date="2003" name="Appl. Microbiol. Biotechnol.">
        <title>The Corynebacterium glutamicum genome: features and impacts on biotechnological processes.</title>
        <authorList>
            <person name="Ikeda M."/>
            <person name="Nakagawa S."/>
        </authorList>
    </citation>
    <scope>NUCLEOTIDE SEQUENCE [LARGE SCALE GENOMIC DNA]</scope>
    <source>
        <strain>ATCC 13032 / DSM 20300 / JCM 1318 / BCRC 11384 / CCUG 27702 / LMG 3730 / NBRC 12168 / NCIMB 10025 / NRRL B-2784 / 534</strain>
    </source>
</reference>
<reference key="2">
    <citation type="journal article" date="2003" name="J. Biotechnol.">
        <title>The complete Corynebacterium glutamicum ATCC 13032 genome sequence and its impact on the production of L-aspartate-derived amino acids and vitamins.</title>
        <authorList>
            <person name="Kalinowski J."/>
            <person name="Bathe B."/>
            <person name="Bartels D."/>
            <person name="Bischoff N."/>
            <person name="Bott M."/>
            <person name="Burkovski A."/>
            <person name="Dusch N."/>
            <person name="Eggeling L."/>
            <person name="Eikmanns B.J."/>
            <person name="Gaigalat L."/>
            <person name="Goesmann A."/>
            <person name="Hartmann M."/>
            <person name="Huthmacher K."/>
            <person name="Kraemer R."/>
            <person name="Linke B."/>
            <person name="McHardy A.C."/>
            <person name="Meyer F."/>
            <person name="Moeckel B."/>
            <person name="Pfefferle W."/>
            <person name="Puehler A."/>
            <person name="Rey D.A."/>
            <person name="Rueckert C."/>
            <person name="Rupp O."/>
            <person name="Sahm H."/>
            <person name="Wendisch V.F."/>
            <person name="Wiegraebe I."/>
            <person name="Tauch A."/>
        </authorList>
    </citation>
    <scope>NUCLEOTIDE SEQUENCE [LARGE SCALE GENOMIC DNA]</scope>
    <source>
        <strain>ATCC 13032 / DSM 20300 / JCM 1318 / BCRC 11384 / CCUG 27702 / LMG 3730 / NBRC 12168 / NCIMB 10025 / NRRL B-2784 / 534</strain>
    </source>
</reference>
<reference key="3">
    <citation type="journal article" date="2007" name="J. Biol. Chem.">
        <title>Identification of a novel arabinofuranosyltransferase AftB involved in a terminal step of cell wall arabinan biosynthesis in Corynebacterianeae, such as Corynebacterium glutamicum and Mycobacterium tuberculosis.</title>
        <authorList>
            <person name="Seidel M."/>
            <person name="Alderwick L.J."/>
            <person name="Birch H.L."/>
            <person name="Sahm H."/>
            <person name="Eggeling L."/>
            <person name="Besra G.S."/>
        </authorList>
    </citation>
    <scope>FUNCTION</scope>
    <scope>DISRUPTION PHENOTYPE</scope>
    <scope>NOMENCLATURE</scope>
</reference>
<sequence>MTFSPQRPEFETGKQPDPETEHAGDFFEETSSSAPRAASNGSSGPNYTLITTFLAALTAGIFAFWAGWTRKWISDDGLIVLRTVRNLLAGNGPVFNAGERVEANTSTLWQYCIYLVALVTDYRLEDIALWLALLFTTAASIIGVLGTAHLHRKRIAVLLPAGVIGYFSLSPARDFATSGLEWGLSLMWISIQWLLLVLWATSGKTSGKKASGAKTSNPIVNAGAITYALAFWSGLSWLVRPELAMYGGLTGVLLLLTAPRWRVVLGILVAALPLPAAYQIFRMGYYGLMVPHTAVAKSASDAVWGTGWEYVEDFTGPYNLWLGLALLLAAGALTVWKTDKHLAIPKGRLGLRTPGMAIALLVICALVHFLYVIRVGGDFMHGRMLLLPLFAILLPVSVIPVNVVDRGWQDLVALVLVFSTWVWSTVVFVQGHQWENTGQHVVDERDFWIDFTNRDEDHPPLYAEDFLTVDSMNDYAEVMRDQTLVNPTGQQLNILASSDPTTYSWITTPRVEGVEAGDLANLSPTVFHVNLGMTSMNAPLNVRVTDLIGLATPLAARQPRIEGGRIGHDKLMDLEWQVAESATPLAYTPGWLDTQKTYEARQALRHPELVHLFQTYREPMSYHRFVDNIKYALTTGRTLEISDNPEDLLKEFNPTPAEIQDGLETIAWPGEIKLDEPRGEPLYSSQ</sequence>
<comment type="function">
    <text evidence="3">Involved in the biosynthesis of the arabinogalactan (AG) region of the mycolylarabinogalactan-peptidoglycan (mAGP) complex, an essential component of the cell wall. Catalyzes the transfer of arabinofuranosyl (Araf) residues from the sugar donor decaprenyl-phospho-arabinose (DPA) to the arabinan domain to form terminal beta-(1-&gt;2)-linked Araf residues, which marks the end point for AG arabinan biosynthesis before decoration with mycolic acids.</text>
</comment>
<comment type="pathway">
    <text>Cell wall biogenesis; cell wall polysaccharide biosynthesis.</text>
</comment>
<comment type="subcellular location">
    <subcellularLocation>
        <location evidence="4">Membrane</location>
        <topology evidence="4">Multi-pass membrane protein</topology>
    </subcellularLocation>
</comment>
<comment type="disruption phenotype">
    <text evidence="3">Cells lacking this gene show an absence of the cell wall-bound corynomycolic acids and of beta-(1-&gt;2) Araf linkage.</text>
</comment>
<comment type="similarity">
    <text evidence="4">Belongs to the AftB family.</text>
</comment>
<feature type="chain" id="PRO_0000420578" description="Terminal beta-(1-&gt;2)-arabinofuranosyltransferase">
    <location>
        <begin position="1"/>
        <end position="686"/>
    </location>
</feature>
<feature type="transmembrane region" description="Helical" evidence="1">
    <location>
        <begin position="48"/>
        <end position="68"/>
    </location>
</feature>
<feature type="transmembrane region" description="Helical" evidence="1">
    <location>
        <begin position="127"/>
        <end position="147"/>
    </location>
</feature>
<feature type="transmembrane region" description="Helical" evidence="1">
    <location>
        <begin position="155"/>
        <end position="175"/>
    </location>
</feature>
<feature type="transmembrane region" description="Helical" evidence="1">
    <location>
        <begin position="180"/>
        <end position="200"/>
    </location>
</feature>
<feature type="transmembrane region" description="Helical" evidence="1">
    <location>
        <begin position="219"/>
        <end position="239"/>
    </location>
</feature>
<feature type="transmembrane region" description="Helical" evidence="1">
    <location>
        <begin position="261"/>
        <end position="281"/>
    </location>
</feature>
<feature type="transmembrane region" description="Helical" evidence="1">
    <location>
        <begin position="316"/>
        <end position="336"/>
    </location>
</feature>
<feature type="transmembrane region" description="Helical" evidence="1">
    <location>
        <begin position="353"/>
        <end position="373"/>
    </location>
</feature>
<feature type="transmembrane region" description="Helical" evidence="1">
    <location>
        <begin position="384"/>
        <end position="404"/>
    </location>
</feature>
<feature type="transmembrane region" description="Helical" evidence="1">
    <location>
        <begin position="411"/>
        <end position="431"/>
    </location>
</feature>
<feature type="region of interest" description="Disordered" evidence="2">
    <location>
        <begin position="1"/>
        <end position="42"/>
    </location>
</feature>
<feature type="compositionally biased region" description="Basic and acidic residues" evidence="2">
    <location>
        <begin position="8"/>
        <end position="25"/>
    </location>
</feature>
<feature type="compositionally biased region" description="Polar residues" evidence="2">
    <location>
        <begin position="29"/>
        <end position="42"/>
    </location>
</feature>
<feature type="sequence conflict" description="In Ref. 2; CAF20903." evidence="4" ref="2">
    <original>L</original>
    <variation>V</variation>
    <location>
        <position position="351"/>
    </location>
</feature>
<gene>
    <name type="primary">aftB</name>
    <name type="ordered locus">Cgl2879</name>
    <name type="ordered locus">cg3187</name>
</gene>